<gene>
    <name type="primary">SCARF1</name>
    <name type="synonym">KIAA0149</name>
    <name type="synonym">SREC</name>
</gene>
<comment type="function">
    <text evidence="1">Mediates the binding and degradation of acetylated low density lipoprotein (Ac-LDL). Mediates heterophilic interactions, suggesting a function as adhesion protein. Plays a role in the regulation of neurite-like outgrowth (By similarity).</text>
</comment>
<comment type="subunit">
    <text evidence="1">Heterophilic interaction with SREC2 via its extracellular domain. The heterophilic interaction is suppressed by the presence of ligand such as Ac-LDL. Interacts with AVIL (By similarity).</text>
</comment>
<comment type="interaction">
    <interactant intactId="EBI-12056025">
        <id>Q14162</id>
    </interactant>
    <interactant intactId="EBI-740744">
        <id>O95471</id>
        <label>CLDN7</label>
    </interactant>
    <organismsDiffer>false</organismsDiffer>
    <experiments>3</experiments>
</comment>
<comment type="interaction">
    <interactant intactId="EBI-12056025">
        <id>Q14162</id>
    </interactant>
    <interactant intactId="EBI-724524">
        <id>O75208</id>
        <label>COQ9</label>
    </interactant>
    <organismsDiffer>false</organismsDiffer>
    <experiments>3</experiments>
</comment>
<comment type="interaction">
    <interactant intactId="EBI-12056025">
        <id>Q14162</id>
    </interactant>
    <interactant intactId="EBI-6942903">
        <id>Q96BA8</id>
        <label>CREB3L1</label>
    </interactant>
    <organismsDiffer>false</organismsDiffer>
    <experiments>3</experiments>
</comment>
<comment type="interaction">
    <interactant intactId="EBI-12056025">
        <id>Q14162</id>
    </interactant>
    <interactant intactId="EBI-3867333">
        <id>A8MQ03</id>
        <label>CYSRT1</label>
    </interactant>
    <organismsDiffer>false</organismsDiffer>
    <experiments>3</experiments>
</comment>
<comment type="interaction">
    <interactant intactId="EBI-12056025">
        <id>Q14162</id>
    </interactant>
    <interactant intactId="EBI-18304435">
        <id>Q5JX71</id>
        <label>FAM209A</label>
    </interactant>
    <organismsDiffer>false</organismsDiffer>
    <experiments>3</experiments>
</comment>
<comment type="interaction">
    <interactant intactId="EBI-12056025">
        <id>Q14162</id>
    </interactant>
    <interactant intactId="EBI-17458373">
        <id>P48165</id>
        <label>GJA8</label>
    </interactant>
    <organismsDiffer>false</organismsDiffer>
    <experiments>3</experiments>
</comment>
<comment type="interaction">
    <interactant intactId="EBI-12056025">
        <id>Q14162</id>
    </interactant>
    <interactant intactId="EBI-2927498">
        <id>O60883</id>
        <label>GPR37L1</label>
    </interactant>
    <organismsDiffer>false</organismsDiffer>
    <experiments>3</experiments>
</comment>
<comment type="interaction">
    <interactant intactId="EBI-12056025">
        <id>Q14162</id>
    </interactant>
    <interactant intactId="EBI-11721746">
        <id>Q8TED1</id>
        <label>GPX8</label>
    </interactant>
    <organismsDiffer>false</organismsDiffer>
    <experiments>3</experiments>
</comment>
<comment type="interaction">
    <interactant intactId="EBI-12056025">
        <id>Q14162</id>
    </interactant>
    <interactant intactId="EBI-18053395">
        <id>Q7Z5P4</id>
        <label>HSD17B13</label>
    </interactant>
    <organismsDiffer>false</organismsDiffer>
    <experiments>3</experiments>
</comment>
<comment type="interaction">
    <interactant intactId="EBI-12056025">
        <id>Q14162</id>
    </interactant>
    <interactant intactId="EBI-12017638">
        <id>P48051</id>
        <label>KCNJ6</label>
    </interactant>
    <organismsDiffer>false</organismsDiffer>
    <experiments>3</experiments>
</comment>
<comment type="interaction">
    <interactant intactId="EBI-12056025">
        <id>Q14162</id>
    </interactant>
    <interactant intactId="EBI-11959885">
        <id>Q07627</id>
        <label>KRTAP1-1</label>
    </interactant>
    <organismsDiffer>false</organismsDiffer>
    <experiments>3</experiments>
</comment>
<comment type="interaction">
    <interactant intactId="EBI-12056025">
        <id>Q14162</id>
    </interactant>
    <interactant intactId="EBI-10171774">
        <id>P60410</id>
        <label>KRTAP10-8</label>
    </interactant>
    <organismsDiffer>false</organismsDiffer>
    <experiments>3</experiments>
</comment>
<comment type="interaction">
    <interactant intactId="EBI-12056025">
        <id>Q14162</id>
    </interactant>
    <interactant intactId="EBI-11987425">
        <id>Q6L8G8</id>
        <label>KRTAP5-7</label>
    </interactant>
    <organismsDiffer>false</organismsDiffer>
    <experiments>3</experiments>
</comment>
<comment type="interaction">
    <interactant intactId="EBI-12056025">
        <id>Q14162</id>
    </interactant>
    <interactant intactId="EBI-11741311">
        <id>Q5T752</id>
        <label>LCE1D</label>
    </interactant>
    <organismsDiffer>false</organismsDiffer>
    <experiments>3</experiments>
</comment>
<comment type="interaction">
    <interactant intactId="EBI-12056025">
        <id>Q14162</id>
    </interactant>
    <interactant intactId="EBI-17566767">
        <id>Q6ZUX7</id>
        <label>LHFPL2</label>
    </interactant>
    <organismsDiffer>false</organismsDiffer>
    <experiments>3</experiments>
</comment>
<comment type="interaction">
    <interactant intactId="EBI-12056025">
        <id>Q14162</id>
    </interactant>
    <interactant intactId="EBI-16439278">
        <id>Q6FHY5</id>
        <label>MEOX2</label>
    </interactant>
    <organismsDiffer>false</organismsDiffer>
    <experiments>3</experiments>
</comment>
<comment type="interaction">
    <interactant intactId="EBI-12056025">
        <id>Q14162</id>
    </interactant>
    <interactant intactId="EBI-1045440">
        <id>Q9HC36</id>
        <label>MRM3</label>
    </interactant>
    <organismsDiffer>false</organismsDiffer>
    <experiments>3</experiments>
</comment>
<comment type="interaction">
    <interactant intactId="EBI-12056025">
        <id>Q14162</id>
    </interactant>
    <interactant intactId="EBI-10969203">
        <id>O14524-2</id>
        <label>NEMP1</label>
    </interactant>
    <organismsDiffer>false</organismsDiffer>
    <experiments>3</experiments>
</comment>
<comment type="interaction">
    <interactant intactId="EBI-12056025">
        <id>Q14162</id>
    </interactant>
    <interactant intactId="EBI-5235586">
        <id>Q8TBB6</id>
        <label>SLC7A14</label>
    </interactant>
    <organismsDiffer>false</organismsDiffer>
    <experiments>3</experiments>
</comment>
<comment type="interaction">
    <interactant intactId="EBI-12056025">
        <id>Q14162</id>
    </interactant>
    <interactant intactId="EBI-2562368">
        <id>P22735</id>
        <label>TGM1</label>
    </interactant>
    <organismsDiffer>false</organismsDiffer>
    <experiments>3</experiments>
</comment>
<comment type="subcellular location">
    <subcellularLocation>
        <location evidence="12">Membrane</location>
        <topology evidence="12">Single-pass type I membrane protein</topology>
    </subcellularLocation>
</comment>
<comment type="alternative products">
    <event type="alternative splicing"/>
    <isoform>
        <id>Q14162-1</id>
        <name>1</name>
        <name>SREC-1</name>
        <sequence type="displayed"/>
    </isoform>
    <isoform>
        <id>Q14162-2</id>
        <name>2</name>
        <name>SREC-5</name>
        <sequence type="described" ref="VSP_039956"/>
    </isoform>
    <isoform>
        <id>Q14162-3</id>
        <name>3</name>
        <name>SREC-3</name>
        <sequence type="described" ref="VSP_039960 VSP_039961"/>
    </isoform>
    <isoform>
        <id>Q14162-4</id>
        <name>4</name>
        <name>SREC-4</name>
        <sequence type="described" ref="VSP_039957"/>
    </isoform>
    <isoform>
        <id>Q14162-5</id>
        <name>5</name>
        <name>SREC-2</name>
        <sequence type="described" ref="VSP_039958 VSP_039959"/>
    </isoform>
</comment>
<comment type="tissue specificity">
    <text>Endothelial cells.</text>
</comment>
<comment type="miscellaneous">
    <molecule>Isoform 4</molecule>
    <text evidence="12">May be produced at very low levels due to a premature stop codon in the mRNA, leading to nonsense-mediated mRNA decay.</text>
</comment>
<proteinExistence type="evidence at protein level"/>
<keyword id="KW-0002">3D-structure</keyword>
<keyword id="KW-0025">Alternative splicing</keyword>
<keyword id="KW-0130">Cell adhesion</keyword>
<keyword id="KW-1015">Disulfide bond</keyword>
<keyword id="KW-0245">EGF-like domain</keyword>
<keyword id="KW-0325">Glycoprotein</keyword>
<keyword id="KW-0472">Membrane</keyword>
<keyword id="KW-0597">Phosphoprotein</keyword>
<keyword id="KW-1267">Proteomics identification</keyword>
<keyword id="KW-0675">Receptor</keyword>
<keyword id="KW-1185">Reference proteome</keyword>
<keyword id="KW-0677">Repeat</keyword>
<keyword id="KW-0732">Signal</keyword>
<keyword id="KW-0812">Transmembrane</keyword>
<keyword id="KW-1133">Transmembrane helix</keyword>
<reference key="1">
    <citation type="journal article" date="1997" name="J. Biol. Chem.">
        <title>Expression cloning of a novel scavenger receptor from human endothelial cells.</title>
        <authorList>
            <person name="Adachi H."/>
            <person name="Tsujimoto M."/>
            <person name="Arai H."/>
            <person name="Inoue K."/>
        </authorList>
    </citation>
    <scope>NUCLEOTIDE SEQUENCE [MRNA]</scope>
    <scope>VARIANTS VAL-425; ASP-639; TRP-662 AND SER-667</scope>
    <source>
        <tissue>Umbilical vein endothelial cell</tissue>
    </source>
</reference>
<reference key="2">
    <citation type="journal article" date="2002" name="J. Biol. Chem.">
        <title>Characterization of the human gene encoding the scavenger receptor expressed by endothelial cell and its regulation by a novel transcription factor, endothelial zinc finger protein-2.</title>
        <authorList>
            <person name="Adachi H."/>
            <person name="Tsujimoto M."/>
        </authorList>
    </citation>
    <scope>NUCLEOTIDE SEQUENCE [GENOMIC DNA] (ISOFORM 1)</scope>
    <scope>NUCLEOTIDE SEQUENCE [MRNA] (ISOFORMS 2; 3; 4 AND 5)</scope>
    <scope>VARIANTS VAL-425; ASP-639 AND SER-667</scope>
    <source>
        <tissue>Peripheral blood leukocyte</tissue>
    </source>
</reference>
<reference key="3">
    <citation type="journal article" date="1995" name="DNA Res.">
        <title>Prediction of the coding sequences of unidentified human genes. IV. The coding sequences of 40 new genes (KIAA0121-KIAA0160) deduced by analysis of cDNA clones from human cell line KG-1.</title>
        <authorList>
            <person name="Nagase T."/>
            <person name="Seki N."/>
            <person name="Tanaka A."/>
            <person name="Ishikawa K."/>
            <person name="Nomura N."/>
        </authorList>
    </citation>
    <scope>NUCLEOTIDE SEQUENCE [LARGE SCALE MRNA]</scope>
    <scope>VARIANTS VAL-425; ASP-639; TRP-662 AND SER-667</scope>
    <source>
        <tissue>Bone marrow</tissue>
    </source>
</reference>
<reference key="4">
    <citation type="journal article" date="2006" name="Nature">
        <title>DNA sequence of human chromosome 17 and analysis of rearrangement in the human lineage.</title>
        <authorList>
            <person name="Zody M.C."/>
            <person name="Garber M."/>
            <person name="Adams D.J."/>
            <person name="Sharpe T."/>
            <person name="Harrow J."/>
            <person name="Lupski J.R."/>
            <person name="Nicholson C."/>
            <person name="Searle S.M."/>
            <person name="Wilming L."/>
            <person name="Young S.K."/>
            <person name="Abouelleil A."/>
            <person name="Allen N.R."/>
            <person name="Bi W."/>
            <person name="Bloom T."/>
            <person name="Borowsky M.L."/>
            <person name="Bugalter B.E."/>
            <person name="Butler J."/>
            <person name="Chang J.L."/>
            <person name="Chen C.-K."/>
            <person name="Cook A."/>
            <person name="Corum B."/>
            <person name="Cuomo C.A."/>
            <person name="de Jong P.J."/>
            <person name="DeCaprio D."/>
            <person name="Dewar K."/>
            <person name="FitzGerald M."/>
            <person name="Gilbert J."/>
            <person name="Gibson R."/>
            <person name="Gnerre S."/>
            <person name="Goldstein S."/>
            <person name="Grafham D.V."/>
            <person name="Grocock R."/>
            <person name="Hafez N."/>
            <person name="Hagopian D.S."/>
            <person name="Hart E."/>
            <person name="Norman C.H."/>
            <person name="Humphray S."/>
            <person name="Jaffe D.B."/>
            <person name="Jones M."/>
            <person name="Kamal M."/>
            <person name="Khodiyar V.K."/>
            <person name="LaButti K."/>
            <person name="Laird G."/>
            <person name="Lehoczky J."/>
            <person name="Liu X."/>
            <person name="Lokyitsang T."/>
            <person name="Loveland J."/>
            <person name="Lui A."/>
            <person name="Macdonald P."/>
            <person name="Major J.E."/>
            <person name="Matthews L."/>
            <person name="Mauceli E."/>
            <person name="McCarroll S.A."/>
            <person name="Mihalev A.H."/>
            <person name="Mudge J."/>
            <person name="Nguyen C."/>
            <person name="Nicol R."/>
            <person name="O'Leary S.B."/>
            <person name="Osoegawa K."/>
            <person name="Schwartz D.C."/>
            <person name="Shaw-Smith C."/>
            <person name="Stankiewicz P."/>
            <person name="Steward C."/>
            <person name="Swarbreck D."/>
            <person name="Venkataraman V."/>
            <person name="Whittaker C.A."/>
            <person name="Yang X."/>
            <person name="Zimmer A.R."/>
            <person name="Bradley A."/>
            <person name="Hubbard T."/>
            <person name="Birren B.W."/>
            <person name="Rogers J."/>
            <person name="Lander E.S."/>
            <person name="Nusbaum C."/>
        </authorList>
    </citation>
    <scope>NUCLEOTIDE SEQUENCE [LARGE SCALE GENOMIC DNA]</scope>
</reference>
<reference key="5">
    <citation type="submission" date="2005-09" db="EMBL/GenBank/DDBJ databases">
        <authorList>
            <person name="Mural R.J."/>
            <person name="Istrail S."/>
            <person name="Sutton G.G."/>
            <person name="Florea L."/>
            <person name="Halpern A.L."/>
            <person name="Mobarry C.M."/>
            <person name="Lippert R."/>
            <person name="Walenz B."/>
            <person name="Shatkay H."/>
            <person name="Dew I."/>
            <person name="Miller J.R."/>
            <person name="Flanigan M.J."/>
            <person name="Edwards N.J."/>
            <person name="Bolanos R."/>
            <person name="Fasulo D."/>
            <person name="Halldorsson B.V."/>
            <person name="Hannenhalli S."/>
            <person name="Turner R."/>
            <person name="Yooseph S."/>
            <person name="Lu F."/>
            <person name="Nusskern D.R."/>
            <person name="Shue B.C."/>
            <person name="Zheng X.H."/>
            <person name="Zhong F."/>
            <person name="Delcher A.L."/>
            <person name="Huson D.H."/>
            <person name="Kravitz S.A."/>
            <person name="Mouchard L."/>
            <person name="Reinert K."/>
            <person name="Remington K.A."/>
            <person name="Clark A.G."/>
            <person name="Waterman M.S."/>
            <person name="Eichler E.E."/>
            <person name="Adams M.D."/>
            <person name="Hunkapiller M.W."/>
            <person name="Myers E.W."/>
            <person name="Venter J.C."/>
        </authorList>
    </citation>
    <scope>NUCLEOTIDE SEQUENCE [LARGE SCALE GENOMIC DNA]</scope>
    <scope>VARIANT VAL-425</scope>
</reference>
<reference key="6">
    <citation type="journal article" date="2004" name="Genome Res.">
        <title>The status, quality, and expansion of the NIH full-length cDNA project: the Mammalian Gene Collection (MGC).</title>
        <authorList>
            <consortium name="The MGC Project Team"/>
        </authorList>
    </citation>
    <scope>NUCLEOTIDE SEQUENCE [LARGE SCALE MRNA]</scope>
    <scope>VARIANTS VAL-425; ASP-639 AND SER-667</scope>
    <source>
        <tissue>Testis</tissue>
    </source>
</reference>
<reference key="7">
    <citation type="journal article" date="2008" name="J. Proteome Res.">
        <title>Phosphoproteome of resting human platelets.</title>
        <authorList>
            <person name="Zahedi R.P."/>
            <person name="Lewandrowski U."/>
            <person name="Wiesner J."/>
            <person name="Wortelkamp S."/>
            <person name="Moebius J."/>
            <person name="Schuetz C."/>
            <person name="Walter U."/>
            <person name="Gambaryan S."/>
            <person name="Sickmann A."/>
        </authorList>
    </citation>
    <scope>IDENTIFICATION BY MASS SPECTROMETRY [LARGE SCALE ANALYSIS]</scope>
    <source>
        <tissue>Platelet</tissue>
    </source>
</reference>
<reference key="8">
    <citation type="journal article" date="2014" name="J. Proteomics">
        <title>An enzyme assisted RP-RPLC approach for in-depth analysis of human liver phosphoproteome.</title>
        <authorList>
            <person name="Bian Y."/>
            <person name="Song C."/>
            <person name="Cheng K."/>
            <person name="Dong M."/>
            <person name="Wang F."/>
            <person name="Huang J."/>
            <person name="Sun D."/>
            <person name="Wang L."/>
            <person name="Ye M."/>
            <person name="Zou H."/>
        </authorList>
    </citation>
    <scope>PHOSPHORYLATION [LARGE SCALE ANALYSIS] AT SER-606</scope>
    <scope>IDENTIFICATION BY MASS SPECTROMETRY [LARGE SCALE ANALYSIS]</scope>
    <source>
        <tissue>Liver</tissue>
    </source>
</reference>
<evidence type="ECO:0000250" key="1"/>
<evidence type="ECO:0000250" key="2">
    <source>
        <dbReference type="UniProtKB" id="Q5ND28"/>
    </source>
</evidence>
<evidence type="ECO:0000255" key="3"/>
<evidence type="ECO:0000255" key="4">
    <source>
        <dbReference type="PROSITE-ProRule" id="PRU00076"/>
    </source>
</evidence>
<evidence type="ECO:0000256" key="5">
    <source>
        <dbReference type="SAM" id="MobiDB-lite"/>
    </source>
</evidence>
<evidence type="ECO:0000269" key="6">
    <source>
    </source>
</evidence>
<evidence type="ECO:0000269" key="7">
    <source>
    </source>
</evidence>
<evidence type="ECO:0000269" key="8">
    <source>
    </source>
</evidence>
<evidence type="ECO:0000269" key="9">
    <source>
    </source>
</evidence>
<evidence type="ECO:0000269" key="10">
    <source ref="5"/>
</evidence>
<evidence type="ECO:0000303" key="11">
    <source>
    </source>
</evidence>
<evidence type="ECO:0000305" key="12"/>
<evidence type="ECO:0007744" key="13">
    <source>
    </source>
</evidence>
<evidence type="ECO:0007829" key="14">
    <source>
        <dbReference type="PDB" id="8HN0"/>
    </source>
</evidence>
<evidence type="ECO:0007829" key="15">
    <source>
        <dbReference type="PDB" id="8HNA"/>
    </source>
</evidence>
<protein>
    <recommendedName>
        <fullName>Scavenger receptor class F member 1</fullName>
    </recommendedName>
    <alternativeName>
        <fullName>Acetyl LDL receptor</fullName>
    </alternativeName>
    <alternativeName>
        <fullName>Scavenger receptor expressed by endothelial cells 1</fullName>
        <shortName>SREC-I</shortName>
    </alternativeName>
</protein>
<feature type="signal peptide" evidence="3">
    <location>
        <begin position="1"/>
        <end position="19"/>
    </location>
</feature>
<feature type="chain" id="PRO_0000007738" description="Scavenger receptor class F member 1">
    <location>
        <begin position="20"/>
        <end position="830"/>
    </location>
</feature>
<feature type="topological domain" description="Extracellular" evidence="3">
    <location>
        <begin position="20"/>
        <end position="421"/>
    </location>
</feature>
<feature type="transmembrane region" description="Helical" evidence="3">
    <location>
        <begin position="422"/>
        <end position="442"/>
    </location>
</feature>
<feature type="topological domain" description="Cytoplasmic" evidence="3">
    <location>
        <begin position="443"/>
        <end position="830"/>
    </location>
</feature>
<feature type="domain" description="EGF-like 1" evidence="4">
    <location>
        <begin position="53"/>
        <end position="87"/>
    </location>
</feature>
<feature type="domain" description="EGF-like 2" evidence="4">
    <location>
        <begin position="95"/>
        <end position="130"/>
    </location>
</feature>
<feature type="domain" description="EGF-like 3" evidence="4">
    <location>
        <begin position="155"/>
        <end position="191"/>
    </location>
</feature>
<feature type="domain" description="EGF-like 4" evidence="4">
    <location>
        <begin position="215"/>
        <end position="249"/>
    </location>
</feature>
<feature type="domain" description="EGF-like 5" evidence="4">
    <location>
        <begin position="302"/>
        <end position="339"/>
    </location>
</feature>
<feature type="domain" description="EGF-like 6" evidence="4">
    <location>
        <begin position="351"/>
        <end position="382"/>
    </location>
</feature>
<feature type="region of interest" description="Disordered" evidence="5">
    <location>
        <begin position="516"/>
        <end position="539"/>
    </location>
</feature>
<feature type="region of interest" description="Disordered" evidence="5">
    <location>
        <begin position="581"/>
        <end position="688"/>
    </location>
</feature>
<feature type="region of interest" description="Disordered" evidence="5">
    <location>
        <begin position="715"/>
        <end position="830"/>
    </location>
</feature>
<feature type="compositionally biased region" description="Acidic residues" evidence="5">
    <location>
        <begin position="634"/>
        <end position="643"/>
    </location>
</feature>
<feature type="compositionally biased region" description="Low complexity" evidence="5">
    <location>
        <begin position="644"/>
        <end position="653"/>
    </location>
</feature>
<feature type="modified residue" description="Phosphoserine" evidence="2">
    <location>
        <position position="589"/>
    </location>
</feature>
<feature type="modified residue" description="Phosphoserine" evidence="13">
    <location>
        <position position="606"/>
    </location>
</feature>
<feature type="glycosylation site" description="N-linked (GlcNAc...) asparagine" evidence="3">
    <location>
        <position position="289"/>
    </location>
</feature>
<feature type="glycosylation site" description="N-linked (GlcNAc...) asparagine" evidence="3">
    <location>
        <position position="382"/>
    </location>
</feature>
<feature type="glycosylation site" description="N-linked (GlcNAc...) asparagine" evidence="3">
    <location>
        <position position="393"/>
    </location>
</feature>
<feature type="disulfide bond" evidence="4">
    <location>
        <begin position="57"/>
        <end position="69"/>
    </location>
</feature>
<feature type="disulfide bond" evidence="4">
    <location>
        <begin position="63"/>
        <end position="75"/>
    </location>
</feature>
<feature type="disulfide bond" evidence="4">
    <location>
        <begin position="77"/>
        <end position="86"/>
    </location>
</feature>
<feature type="disulfide bond" evidence="4">
    <location>
        <begin position="99"/>
        <end position="111"/>
    </location>
</feature>
<feature type="disulfide bond" evidence="4">
    <location>
        <begin position="105"/>
        <end position="118"/>
    </location>
</feature>
<feature type="disulfide bond" evidence="4">
    <location>
        <begin position="120"/>
        <end position="129"/>
    </location>
</feature>
<feature type="disulfide bond" evidence="4">
    <location>
        <begin position="159"/>
        <end position="172"/>
    </location>
</feature>
<feature type="disulfide bond" evidence="4">
    <location>
        <begin position="165"/>
        <end position="179"/>
    </location>
</feature>
<feature type="disulfide bond" evidence="4">
    <location>
        <begin position="181"/>
        <end position="190"/>
    </location>
</feature>
<feature type="disulfide bond" evidence="4">
    <location>
        <begin position="219"/>
        <end position="230"/>
    </location>
</feature>
<feature type="disulfide bond" evidence="4">
    <location>
        <begin position="225"/>
        <end position="237"/>
    </location>
</feature>
<feature type="disulfide bond" evidence="4">
    <location>
        <begin position="239"/>
        <end position="248"/>
    </location>
</feature>
<feature type="disulfide bond" evidence="4">
    <location>
        <begin position="306"/>
        <end position="319"/>
    </location>
</feature>
<feature type="disulfide bond" evidence="4">
    <location>
        <begin position="313"/>
        <end position="326"/>
    </location>
</feature>
<feature type="disulfide bond" evidence="4">
    <location>
        <begin position="329"/>
        <end position="338"/>
    </location>
</feature>
<feature type="disulfide bond" evidence="4">
    <location>
        <begin position="355"/>
        <end position="363"/>
    </location>
</feature>
<feature type="disulfide bond" evidence="4">
    <location>
        <begin position="358"/>
        <end position="370"/>
    </location>
</feature>
<feature type="disulfide bond" evidence="4">
    <location>
        <begin position="372"/>
        <end position="381"/>
    </location>
</feature>
<feature type="splice variant" id="VSP_039956" description="In isoform 2." evidence="11">
    <location>
        <begin position="330"/>
        <end position="415"/>
    </location>
</feature>
<feature type="splice variant" id="VSP_039957" description="In isoform 4." evidence="11">
    <location>
        <begin position="338"/>
        <end position="830"/>
    </location>
</feature>
<feature type="splice variant" id="VSP_039958" description="In isoform 5." evidence="11">
    <original>CEDPC</original>
    <variation>GPVIL</variation>
    <location>
        <begin position="338"/>
        <end position="342"/>
    </location>
</feature>
<feature type="splice variant" id="VSP_039959" description="In isoform 5." evidence="11">
    <location>
        <begin position="343"/>
        <end position="830"/>
    </location>
</feature>
<feature type="splice variant" id="VSP_039960" description="In isoform 3." evidence="11">
    <original>VSHHDPEVPFNHSFIEPPSAGWATDDSFSSDPESGEADEVPAYCVPPQEGMVPVAQAGSSEASLAAGAFPPPED</original>
    <variation>ASSSRPLPAGPLMTPSHPILSLERQMRFLPTVCHPKKGWSLWPRQGRQRPAWLQVLSRPLRTPPRHSPSRAPPA</variation>
    <location>
        <begin position="496"/>
        <end position="569"/>
    </location>
</feature>
<feature type="splice variant" id="VSP_039961" description="In isoform 3." evidence="11">
    <location>
        <begin position="570"/>
        <end position="830"/>
    </location>
</feature>
<feature type="sequence variant" id="VAR_047249" description="In dbSNP:rs2272011." evidence="6 7 8 9 10">
    <original>A</original>
    <variation>V</variation>
    <location>
        <position position="425"/>
    </location>
</feature>
<feature type="sequence variant" id="VAR_047250" description="In dbSNP:rs35455643.">
    <original>R</original>
    <variation>K</variation>
    <location>
        <position position="618"/>
    </location>
</feature>
<feature type="sequence variant" id="VAR_047251" description="In dbSNP:rs3744644." evidence="6 7 8 9">
    <original>E</original>
    <variation>D</variation>
    <location>
        <position position="639"/>
    </location>
</feature>
<feature type="sequence variant" id="VAR_047252" description="In dbSNP:rs8072430." evidence="8 9">
    <original>R</original>
    <variation>W</variation>
    <location>
        <position position="662"/>
    </location>
</feature>
<feature type="sequence variant" id="VAR_047253" description="In dbSNP:rs4790250." evidence="6 7 8 9">
    <original>G</original>
    <variation>S</variation>
    <location>
        <position position="667"/>
    </location>
</feature>
<feature type="sequence variant" id="VAR_047254" description="In dbSNP:rs3760460.">
    <original>G</original>
    <variation>V</variation>
    <location>
        <position position="748"/>
    </location>
</feature>
<feature type="sequence conflict" description="In Ref. 2; BAC02696." evidence="12" ref="2">
    <original>RC</original>
    <variation>PG</variation>
    <location>
        <begin position="328"/>
        <end position="329"/>
    </location>
</feature>
<feature type="strand" evidence="14">
    <location>
        <begin position="29"/>
        <end position="31"/>
    </location>
</feature>
<feature type="strand" evidence="14">
    <location>
        <begin position="39"/>
        <end position="41"/>
    </location>
</feature>
<feature type="strand" evidence="14">
    <location>
        <begin position="48"/>
        <end position="51"/>
    </location>
</feature>
<feature type="helix" evidence="14">
    <location>
        <begin position="59"/>
        <end position="61"/>
    </location>
</feature>
<feature type="strand" evidence="14">
    <location>
        <begin position="67"/>
        <end position="71"/>
    </location>
</feature>
<feature type="strand" evidence="14">
    <location>
        <begin position="74"/>
        <end position="77"/>
    </location>
</feature>
<feature type="strand" evidence="14">
    <location>
        <begin position="81"/>
        <end position="83"/>
    </location>
</feature>
<feature type="strand" evidence="14">
    <location>
        <begin position="94"/>
        <end position="97"/>
    </location>
</feature>
<feature type="turn" evidence="14">
    <location>
        <begin position="104"/>
        <end position="107"/>
    </location>
</feature>
<feature type="strand" evidence="14">
    <location>
        <begin position="108"/>
        <end position="111"/>
    </location>
</feature>
<feature type="turn" evidence="14">
    <location>
        <begin position="113"/>
        <end position="115"/>
    </location>
</feature>
<feature type="strand" evidence="14">
    <location>
        <begin position="118"/>
        <end position="120"/>
    </location>
</feature>
<feature type="strand" evidence="15">
    <location>
        <begin position="124"/>
        <end position="126"/>
    </location>
</feature>
<feature type="strand" evidence="15">
    <location>
        <begin position="139"/>
        <end position="141"/>
    </location>
</feature>
<feature type="turn" evidence="15">
    <location>
        <begin position="143"/>
        <end position="145"/>
    </location>
</feature>
<feature type="strand" evidence="15">
    <location>
        <begin position="148"/>
        <end position="150"/>
    </location>
</feature>
<feature type="strand" evidence="15">
    <location>
        <begin position="154"/>
        <end position="156"/>
    </location>
</feature>
<feature type="strand" evidence="15">
    <location>
        <begin position="169"/>
        <end position="172"/>
    </location>
</feature>
<feature type="turn" evidence="15">
    <location>
        <begin position="174"/>
        <end position="176"/>
    </location>
</feature>
<feature type="strand" evidence="15">
    <location>
        <begin position="179"/>
        <end position="181"/>
    </location>
</feature>
<feature type="strand" evidence="15">
    <location>
        <begin position="185"/>
        <end position="187"/>
    </location>
</feature>
<feature type="turn" evidence="15">
    <location>
        <begin position="203"/>
        <end position="205"/>
    </location>
</feature>
<dbReference type="EMBL" id="D86864">
    <property type="protein sequence ID" value="BAA24070.1"/>
    <property type="molecule type" value="mRNA"/>
</dbReference>
<dbReference type="EMBL" id="AB052946">
    <property type="protein sequence ID" value="BAC02692.1"/>
    <property type="molecule type" value="Genomic_DNA"/>
</dbReference>
<dbReference type="EMBL" id="AB052947">
    <property type="protein sequence ID" value="BAC02693.1"/>
    <property type="molecule type" value="mRNA"/>
</dbReference>
<dbReference type="EMBL" id="AB052948">
    <property type="protein sequence ID" value="BAC02694.1"/>
    <property type="molecule type" value="mRNA"/>
</dbReference>
<dbReference type="EMBL" id="AB052949">
    <property type="protein sequence ID" value="BAC02695.1"/>
    <property type="molecule type" value="mRNA"/>
</dbReference>
<dbReference type="EMBL" id="AB052950">
    <property type="protein sequence ID" value="BAC02696.1"/>
    <property type="molecule type" value="mRNA"/>
</dbReference>
<dbReference type="EMBL" id="D63483">
    <property type="protein sequence ID" value="BAA09770.1"/>
    <property type="molecule type" value="mRNA"/>
</dbReference>
<dbReference type="EMBL" id="AC130343">
    <property type="status" value="NOT_ANNOTATED_CDS"/>
    <property type="molecule type" value="Genomic_DNA"/>
</dbReference>
<dbReference type="EMBL" id="CH471108">
    <property type="protein sequence ID" value="EAW90596.1"/>
    <property type="molecule type" value="Genomic_DNA"/>
</dbReference>
<dbReference type="EMBL" id="BC039735">
    <property type="protein sequence ID" value="AAH39735.1"/>
    <property type="molecule type" value="mRNA"/>
</dbReference>
<dbReference type="CCDS" id="CCDS11007.1">
    <molecule id="Q14162-1"/>
</dbReference>
<dbReference type="CCDS" id="CCDS45564.1">
    <molecule id="Q14162-3"/>
</dbReference>
<dbReference type="RefSeq" id="NP_003684.2">
    <molecule id="Q14162-1"/>
    <property type="nucleotide sequence ID" value="NM_003693.3"/>
</dbReference>
<dbReference type="RefSeq" id="NP_663325.1">
    <molecule id="Q14162-3"/>
    <property type="nucleotide sequence ID" value="NM_145350.3"/>
</dbReference>
<dbReference type="PDB" id="8HN0">
    <property type="method" value="X-ray"/>
    <property type="resolution" value="2.20 A"/>
    <property type="chains" value="A/B=20-132"/>
</dbReference>
<dbReference type="PDB" id="8HNA">
    <property type="method" value="X-ray"/>
    <property type="resolution" value="2.60 A"/>
    <property type="chains" value="B=20-221"/>
</dbReference>
<dbReference type="PDBsum" id="8HN0"/>
<dbReference type="PDBsum" id="8HNA"/>
<dbReference type="SMR" id="Q14162"/>
<dbReference type="BioGRID" id="114146">
    <property type="interactions" value="20"/>
</dbReference>
<dbReference type="FunCoup" id="Q14162">
    <property type="interactions" value="121"/>
</dbReference>
<dbReference type="IntAct" id="Q14162">
    <property type="interactions" value="21"/>
</dbReference>
<dbReference type="MINT" id="Q14162"/>
<dbReference type="STRING" id="9606.ENSP00000263071"/>
<dbReference type="GlyCosmos" id="Q14162">
    <property type="glycosylation" value="3 sites, No reported glycans"/>
</dbReference>
<dbReference type="GlyGen" id="Q14162">
    <property type="glycosylation" value="3 sites"/>
</dbReference>
<dbReference type="iPTMnet" id="Q14162"/>
<dbReference type="PhosphoSitePlus" id="Q14162"/>
<dbReference type="SwissPalm" id="Q14162"/>
<dbReference type="BioMuta" id="SCARF1"/>
<dbReference type="DMDM" id="311033530"/>
<dbReference type="jPOST" id="Q14162"/>
<dbReference type="MassIVE" id="Q14162"/>
<dbReference type="PaxDb" id="9606-ENSP00000263071"/>
<dbReference type="PeptideAtlas" id="Q14162"/>
<dbReference type="ProteomicsDB" id="59887">
    <molecule id="Q14162-1"/>
</dbReference>
<dbReference type="ProteomicsDB" id="59888">
    <molecule id="Q14162-2"/>
</dbReference>
<dbReference type="ProteomicsDB" id="59889">
    <molecule id="Q14162-3"/>
</dbReference>
<dbReference type="ProteomicsDB" id="59890">
    <molecule id="Q14162-4"/>
</dbReference>
<dbReference type="ProteomicsDB" id="59891">
    <molecule id="Q14162-5"/>
</dbReference>
<dbReference type="Antibodypedia" id="22736">
    <property type="antibodies" value="145 antibodies from 34 providers"/>
</dbReference>
<dbReference type="DNASU" id="8578"/>
<dbReference type="Ensembl" id="ENST00000263071.9">
    <molecule id="Q14162-1"/>
    <property type="protein sequence ID" value="ENSP00000263071.4"/>
    <property type="gene ID" value="ENSG00000074660.17"/>
</dbReference>
<dbReference type="Ensembl" id="ENST00000434376.6">
    <molecule id="Q14162-5"/>
    <property type="protein sequence ID" value="ENSP00000411167.2"/>
    <property type="gene ID" value="ENSG00000074660.17"/>
</dbReference>
<dbReference type="Ensembl" id="ENST00000571272.5">
    <molecule id="Q14162-3"/>
    <property type="protein sequence ID" value="ENSP00000458174.1"/>
    <property type="gene ID" value="ENSG00000074660.17"/>
</dbReference>
<dbReference type="Ensembl" id="ENST00000621348.4">
    <molecule id="Q14162-1"/>
    <property type="protein sequence ID" value="ENSP00000481595.1"/>
    <property type="gene ID" value="ENSG00000276336.4"/>
</dbReference>
<dbReference type="Ensembl" id="ENST00000631462.1">
    <molecule id="Q14162-5"/>
    <property type="protein sequence ID" value="ENSP00000487665.1"/>
    <property type="gene ID" value="ENSG00000276336.4"/>
</dbReference>
<dbReference type="Ensembl" id="ENST00000632317.1">
    <molecule id="Q14162-3"/>
    <property type="protein sequence ID" value="ENSP00000488776.1"/>
    <property type="gene ID" value="ENSG00000276336.4"/>
</dbReference>
<dbReference type="GeneID" id="8578"/>
<dbReference type="KEGG" id="hsa:8578"/>
<dbReference type="MANE-Select" id="ENST00000263071.9">
    <property type="protein sequence ID" value="ENSP00000263071.4"/>
    <property type="RefSeq nucleotide sequence ID" value="NM_003693.4"/>
    <property type="RefSeq protein sequence ID" value="NP_003684.2"/>
</dbReference>
<dbReference type="UCSC" id="uc002fsy.3">
    <molecule id="Q14162-1"/>
    <property type="organism name" value="human"/>
</dbReference>
<dbReference type="AGR" id="HGNC:16820"/>
<dbReference type="CTD" id="8578"/>
<dbReference type="DisGeNET" id="8578"/>
<dbReference type="GeneCards" id="SCARF1"/>
<dbReference type="HGNC" id="HGNC:16820">
    <property type="gene designation" value="SCARF1"/>
</dbReference>
<dbReference type="HPA" id="ENSG00000074660">
    <property type="expression patterns" value="Tissue enhanced (lymphoid)"/>
</dbReference>
<dbReference type="MIM" id="607873">
    <property type="type" value="gene"/>
</dbReference>
<dbReference type="neXtProt" id="NX_Q14162"/>
<dbReference type="OpenTargets" id="ENSG00000074660"/>
<dbReference type="PharmGKB" id="PA38420"/>
<dbReference type="VEuPathDB" id="HostDB:ENSG00000074660"/>
<dbReference type="eggNOG" id="KOG1218">
    <property type="taxonomic scope" value="Eukaryota"/>
</dbReference>
<dbReference type="GeneTree" id="ENSGT00950000183101"/>
<dbReference type="HOGENOM" id="CLU_017821_0_0_1"/>
<dbReference type="InParanoid" id="Q14162"/>
<dbReference type="OMA" id="CFHGNCH"/>
<dbReference type="OrthoDB" id="6130531at2759"/>
<dbReference type="PAN-GO" id="Q14162">
    <property type="GO annotations" value="2 GO annotations based on evolutionary models"/>
</dbReference>
<dbReference type="PhylomeDB" id="Q14162"/>
<dbReference type="TreeFam" id="TF332598"/>
<dbReference type="PathwayCommons" id="Q14162"/>
<dbReference type="Reactome" id="R-HSA-3000484">
    <property type="pathway name" value="Scavenging by Class F Receptors"/>
</dbReference>
<dbReference type="SignaLink" id="Q14162"/>
<dbReference type="BioGRID-ORCS" id="8578">
    <property type="hits" value="73 hits in 1152 CRISPR screens"/>
</dbReference>
<dbReference type="GenomeRNAi" id="8578"/>
<dbReference type="Pharos" id="Q14162">
    <property type="development level" value="Tbio"/>
</dbReference>
<dbReference type="PRO" id="PR:Q14162"/>
<dbReference type="Proteomes" id="UP000005640">
    <property type="component" value="Chromosome 17"/>
</dbReference>
<dbReference type="RNAct" id="Q14162">
    <property type="molecule type" value="protein"/>
</dbReference>
<dbReference type="Bgee" id="ENSG00000074660">
    <property type="expression patterns" value="Expressed in spleen and 94 other cell types or tissues"/>
</dbReference>
<dbReference type="ExpressionAtlas" id="Q14162">
    <property type="expression patterns" value="baseline and differential"/>
</dbReference>
<dbReference type="GO" id="GO:0030666">
    <property type="term" value="C:endocytic vesicle membrane"/>
    <property type="evidence" value="ECO:0000304"/>
    <property type="project" value="Reactome"/>
</dbReference>
<dbReference type="GO" id="GO:0016020">
    <property type="term" value="C:membrane"/>
    <property type="evidence" value="ECO:0000314"/>
    <property type="project" value="UniProtKB"/>
</dbReference>
<dbReference type="GO" id="GO:0005886">
    <property type="term" value="C:plasma membrane"/>
    <property type="evidence" value="ECO:0000304"/>
    <property type="project" value="Reactome"/>
</dbReference>
<dbReference type="GO" id="GO:0030169">
    <property type="term" value="F:low-density lipoprotein particle binding"/>
    <property type="evidence" value="ECO:0000314"/>
    <property type="project" value="UniProtKB"/>
</dbReference>
<dbReference type="GO" id="GO:0005044">
    <property type="term" value="F:scavenger receptor activity"/>
    <property type="evidence" value="ECO:0000314"/>
    <property type="project" value="UniProtKB"/>
</dbReference>
<dbReference type="GO" id="GO:0004888">
    <property type="term" value="F:transmembrane signaling receptor activity"/>
    <property type="evidence" value="ECO:0000304"/>
    <property type="project" value="UniProtKB"/>
</dbReference>
<dbReference type="GO" id="GO:0006707">
    <property type="term" value="P:cholesterol catabolic process"/>
    <property type="evidence" value="ECO:0000305"/>
    <property type="project" value="UniProtKB"/>
</dbReference>
<dbReference type="GO" id="GO:0016358">
    <property type="term" value="P:dendrite development"/>
    <property type="evidence" value="ECO:0000318"/>
    <property type="project" value="GO_Central"/>
</dbReference>
<dbReference type="GO" id="GO:0007157">
    <property type="term" value="P:heterophilic cell-cell adhesion via plasma membrane cell adhesion molecules"/>
    <property type="evidence" value="ECO:0000318"/>
    <property type="project" value="GO_Central"/>
</dbReference>
<dbReference type="GO" id="GO:0016322">
    <property type="term" value="P:neuron remodeling"/>
    <property type="evidence" value="ECO:0000250"/>
    <property type="project" value="UniProtKB"/>
</dbReference>
<dbReference type="GO" id="GO:0048680">
    <property type="term" value="P:positive regulation of axon regeneration"/>
    <property type="evidence" value="ECO:0000250"/>
    <property type="project" value="UniProtKB"/>
</dbReference>
<dbReference type="GO" id="GO:0010976">
    <property type="term" value="P:positive regulation of neuron projection development"/>
    <property type="evidence" value="ECO:0000250"/>
    <property type="project" value="UniProtKB"/>
</dbReference>
<dbReference type="GO" id="GO:0006898">
    <property type="term" value="P:receptor-mediated endocytosis"/>
    <property type="evidence" value="ECO:0000304"/>
    <property type="project" value="UniProtKB"/>
</dbReference>
<dbReference type="FunFam" id="2.170.300.10:FF:000047">
    <property type="entry name" value="Scavenger receptor class F member 1 isoform 1"/>
    <property type="match status" value="1"/>
</dbReference>
<dbReference type="FunFam" id="2.170.300.10:FF:000048">
    <property type="entry name" value="scavenger receptor class F member 1 isoform X4"/>
    <property type="match status" value="1"/>
</dbReference>
<dbReference type="FunFam" id="2.10.25.10:FF:000691">
    <property type="entry name" value="Scavenger receptor class F, member 1"/>
    <property type="match status" value="1"/>
</dbReference>
<dbReference type="FunFam" id="2.170.300.10:FF:000013">
    <property type="entry name" value="Scavenger receptor class F, member 2"/>
    <property type="match status" value="1"/>
</dbReference>
<dbReference type="FunFam" id="2.170.300.10:FF:000041">
    <property type="entry name" value="Tyrosine protein kinase receptor tie-1, putative"/>
    <property type="match status" value="1"/>
</dbReference>
<dbReference type="Gene3D" id="2.10.25.10">
    <property type="entry name" value="Laminin"/>
    <property type="match status" value="2"/>
</dbReference>
<dbReference type="Gene3D" id="2.170.300.10">
    <property type="entry name" value="Tie2 ligand-binding domain superfamily"/>
    <property type="match status" value="2"/>
</dbReference>
<dbReference type="InterPro" id="IPR000742">
    <property type="entry name" value="EGF-like_dom"/>
</dbReference>
<dbReference type="InterPro" id="IPR009030">
    <property type="entry name" value="Growth_fac_rcpt_cys_sf"/>
</dbReference>
<dbReference type="InterPro" id="IPR002049">
    <property type="entry name" value="LE_dom"/>
</dbReference>
<dbReference type="InterPro" id="IPR042635">
    <property type="entry name" value="MEGF10/SREC1/2-like"/>
</dbReference>
<dbReference type="PANTHER" id="PTHR24043">
    <property type="entry name" value="SCAVENGER RECEPTOR CLASS F"/>
    <property type="match status" value="1"/>
</dbReference>
<dbReference type="PANTHER" id="PTHR24043:SF0">
    <property type="entry name" value="SCAVENGER RECEPTOR CLASS F MEMBER 1"/>
    <property type="match status" value="1"/>
</dbReference>
<dbReference type="Pfam" id="PF00053">
    <property type="entry name" value="EGF_laminin"/>
    <property type="match status" value="2"/>
</dbReference>
<dbReference type="PRINTS" id="PR00011">
    <property type="entry name" value="EGFLAMININ"/>
</dbReference>
<dbReference type="SMART" id="SM00181">
    <property type="entry name" value="EGF"/>
    <property type="match status" value="9"/>
</dbReference>
<dbReference type="SUPFAM" id="SSF57184">
    <property type="entry name" value="Growth factor receptor domain"/>
    <property type="match status" value="1"/>
</dbReference>
<dbReference type="PROSITE" id="PS00022">
    <property type="entry name" value="EGF_1"/>
    <property type="match status" value="6"/>
</dbReference>
<dbReference type="PROSITE" id="PS01186">
    <property type="entry name" value="EGF_2"/>
    <property type="match status" value="6"/>
</dbReference>
<dbReference type="PROSITE" id="PS50026">
    <property type="entry name" value="EGF_3"/>
    <property type="match status" value="3"/>
</dbReference>
<sequence>MGLGLLLPLLLLWTRGTQGSELDPKGQHVCVASSPSAELQCCAGWRQKDQECTIPICEGPDACQKDEVCVKPGLCRCKPGFFGAHCSSRCPGQYWGPDCRESCPCHPHGQCEPATGACQCQADRWGARCEFPCACGPHGRCDPATGVCHCEPGWWSSTCRRPCQCNTAAARCEQATGACVCKPGWWGRRCSFRCNCHGSPCEQDSGRCACRPGWWGPECQQQCECVRGRCSAASGECTCPPGFRGARCELPCPAGSHGVQCAHSCGRCKHNEPCSPDTGSCESCEPGWNGTQCQQPCLPGTFGESCEQQCPHCRHGEACEPDTGHCQRCDPGWLGPRCEDPCPTGTFGEDCGSTCPTCVQGSCDTVTGDCVCSAGYWGPSCNASCPAGFHGNNCSVPCECPEGLCHPVSGSCQPGSGSRDTALIAGSLVPLLLLFLGLACCACCCWAPRSDLKDRPARDGATVSRMKLQVWGTLTSLGSTLPCRSLSSHKLPWVTVSHHDPEVPFNHSFIEPPSAGWATDDSFSSDPESGEADEVPAYCVPPQEGMVPVAQAGSSEASLAAGAFPPPEDASTPFAIPRTSSLARAKRPSVSFAEGTKFAPQSRRSSGELSSPLRKPKRLSRGAQSGPEGREAEESTGPEEAEAPESFPAAASPGDSATGHRRPPLGGRTVAEHVEAIEGSVQESSGPVTTIYMLAGKPRGSEGPVRSVFRHFGSFQKGQAEAKVKRAIPKPPRQALNRKKGSPGLASGSVGQSPNSAPKAGLPGATGPMAVRPEEAVRGLGAGTESSRRAQEPVSGCGSPEQDPQKQAEEERQEEPEYENVVPISRPPEP</sequence>
<accession>Q14162</accession>
<accession>A8MQ05</accession>
<accession>O43701</accession>
<accession>Q8NHD2</accession>
<accession>Q8NHD3</accession>
<accession>Q8NHD4</accession>
<accession>Q8NHD5</accession>
<organism>
    <name type="scientific">Homo sapiens</name>
    <name type="common">Human</name>
    <dbReference type="NCBI Taxonomy" id="9606"/>
    <lineage>
        <taxon>Eukaryota</taxon>
        <taxon>Metazoa</taxon>
        <taxon>Chordata</taxon>
        <taxon>Craniata</taxon>
        <taxon>Vertebrata</taxon>
        <taxon>Euteleostomi</taxon>
        <taxon>Mammalia</taxon>
        <taxon>Eutheria</taxon>
        <taxon>Euarchontoglires</taxon>
        <taxon>Primates</taxon>
        <taxon>Haplorrhini</taxon>
        <taxon>Catarrhini</taxon>
        <taxon>Hominidae</taxon>
        <taxon>Homo</taxon>
    </lineage>
</organism>
<name>SREC_HUMAN</name>